<name>IPYR_PONAB</name>
<keyword id="KW-0007">Acetylation</keyword>
<keyword id="KW-0963">Cytoplasm</keyword>
<keyword id="KW-0378">Hydrolase</keyword>
<keyword id="KW-0460">Magnesium</keyword>
<keyword id="KW-0479">Metal-binding</keyword>
<keyword id="KW-0597">Phosphoprotein</keyword>
<keyword id="KW-1185">Reference proteome</keyword>
<feature type="initiator methionine" description="Removed" evidence="2">
    <location>
        <position position="1"/>
    </location>
</feature>
<feature type="chain" id="PRO_0000137570" description="Inorganic pyrophosphatase">
    <location>
        <begin position="2"/>
        <end position="289"/>
    </location>
</feature>
<feature type="binding site" evidence="1">
    <location>
        <position position="116"/>
    </location>
    <ligand>
        <name>Mg(2+)</name>
        <dbReference type="ChEBI" id="CHEBI:18420"/>
        <label>1</label>
    </ligand>
</feature>
<feature type="binding site" evidence="1">
    <location>
        <position position="121"/>
    </location>
    <ligand>
        <name>Mg(2+)</name>
        <dbReference type="ChEBI" id="CHEBI:18420"/>
        <label>1</label>
    </ligand>
</feature>
<feature type="binding site" evidence="1">
    <location>
        <position position="121"/>
    </location>
    <ligand>
        <name>Mg(2+)</name>
        <dbReference type="ChEBI" id="CHEBI:18420"/>
        <label>2</label>
    </ligand>
</feature>
<feature type="binding site" evidence="1">
    <location>
        <position position="153"/>
    </location>
    <ligand>
        <name>Mg(2+)</name>
        <dbReference type="ChEBI" id="CHEBI:18420"/>
        <label>1</label>
    </ligand>
</feature>
<feature type="modified residue" description="N-acetylserine" evidence="2">
    <location>
        <position position="2"/>
    </location>
</feature>
<feature type="modified residue" description="N6-acetyllysine" evidence="2">
    <location>
        <position position="57"/>
    </location>
</feature>
<feature type="modified residue" description="N6-acetyllysine" evidence="2">
    <location>
        <position position="228"/>
    </location>
</feature>
<feature type="modified residue" description="Phosphoserine" evidence="2">
    <location>
        <position position="250"/>
    </location>
</feature>
<proteinExistence type="evidence at transcript level"/>
<evidence type="ECO:0000250" key="1"/>
<evidence type="ECO:0000250" key="2">
    <source>
        <dbReference type="UniProtKB" id="Q15181"/>
    </source>
</evidence>
<evidence type="ECO:0000305" key="3"/>
<organism>
    <name type="scientific">Pongo abelii</name>
    <name type="common">Sumatran orangutan</name>
    <name type="synonym">Pongo pygmaeus abelii</name>
    <dbReference type="NCBI Taxonomy" id="9601"/>
    <lineage>
        <taxon>Eukaryota</taxon>
        <taxon>Metazoa</taxon>
        <taxon>Chordata</taxon>
        <taxon>Craniata</taxon>
        <taxon>Vertebrata</taxon>
        <taxon>Euteleostomi</taxon>
        <taxon>Mammalia</taxon>
        <taxon>Eutheria</taxon>
        <taxon>Euarchontoglires</taxon>
        <taxon>Primates</taxon>
        <taxon>Haplorrhini</taxon>
        <taxon>Catarrhini</taxon>
        <taxon>Hominidae</taxon>
        <taxon>Pongo</taxon>
    </lineage>
</organism>
<comment type="catalytic activity">
    <reaction>
        <text>diphosphate + H2O = 2 phosphate + H(+)</text>
        <dbReference type="Rhea" id="RHEA:24576"/>
        <dbReference type="ChEBI" id="CHEBI:15377"/>
        <dbReference type="ChEBI" id="CHEBI:15378"/>
        <dbReference type="ChEBI" id="CHEBI:33019"/>
        <dbReference type="ChEBI" id="CHEBI:43474"/>
        <dbReference type="EC" id="3.6.1.1"/>
    </reaction>
</comment>
<comment type="cofactor">
    <cofactor evidence="1">
        <name>Mg(2+)</name>
        <dbReference type="ChEBI" id="CHEBI:18420"/>
    </cofactor>
</comment>
<comment type="subunit">
    <text evidence="1">Homodimer.</text>
</comment>
<comment type="subcellular location">
    <subcellularLocation>
        <location evidence="1">Cytoplasm</location>
    </subcellularLocation>
</comment>
<comment type="similarity">
    <text evidence="3">Belongs to the PPase family.</text>
</comment>
<sequence length="289" mass="32743">MSGFSTEERAAPFSLEYRVFLKNEKGQYISPFHDIPIYADKDVFHMVVEVPRWSNAKMEIATKDPLNPIKQDVKKRKLRYVANLFPYKGYIWNYGAIPQTWEDPGHNDKHTGCCGDNDPIDVCEIGSKVCARGEIIGVKVLGILAMIDEGETDWKVIAINMDDPDAANYNDINDVKRLKPGYLEATVDWFRRYKVPDGKPENEFAFNAEFKDKDFAIDIIKSTHDHWKALVTKKTNGKGISCMNTTVSESPLKCDPDAARAIVDALPPPCESACTVPTDVDKWFHHQKN</sequence>
<accession>Q5R8T6</accession>
<dbReference type="EC" id="3.6.1.1"/>
<dbReference type="EMBL" id="CR859663">
    <property type="protein sequence ID" value="CAH91824.1"/>
    <property type="molecule type" value="mRNA"/>
</dbReference>
<dbReference type="SMR" id="Q5R8T6"/>
<dbReference type="FunCoup" id="Q5R8T6">
    <property type="interactions" value="1744"/>
</dbReference>
<dbReference type="STRING" id="9601.ENSPPYP00000017963"/>
<dbReference type="eggNOG" id="KOG1626">
    <property type="taxonomic scope" value="Eukaryota"/>
</dbReference>
<dbReference type="InParanoid" id="Q5R8T6"/>
<dbReference type="Proteomes" id="UP000001595">
    <property type="component" value="Unplaced"/>
</dbReference>
<dbReference type="GO" id="GO:0005737">
    <property type="term" value="C:cytoplasm"/>
    <property type="evidence" value="ECO:0007669"/>
    <property type="project" value="UniProtKB-SubCell"/>
</dbReference>
<dbReference type="GO" id="GO:0004427">
    <property type="term" value="F:inorganic diphosphate phosphatase activity"/>
    <property type="evidence" value="ECO:0007669"/>
    <property type="project" value="UniProtKB-EC"/>
</dbReference>
<dbReference type="GO" id="GO:0000287">
    <property type="term" value="F:magnesium ion binding"/>
    <property type="evidence" value="ECO:0007669"/>
    <property type="project" value="InterPro"/>
</dbReference>
<dbReference type="GO" id="GO:0006796">
    <property type="term" value="P:phosphate-containing compound metabolic process"/>
    <property type="evidence" value="ECO:0007669"/>
    <property type="project" value="InterPro"/>
</dbReference>
<dbReference type="CDD" id="cd00412">
    <property type="entry name" value="pyrophosphatase"/>
    <property type="match status" value="1"/>
</dbReference>
<dbReference type="FunFam" id="3.90.80.10:FF:000005">
    <property type="entry name" value="Pyrophosphatase (inorganic) 2"/>
    <property type="match status" value="1"/>
</dbReference>
<dbReference type="Gene3D" id="3.90.80.10">
    <property type="entry name" value="Inorganic pyrophosphatase"/>
    <property type="match status" value="1"/>
</dbReference>
<dbReference type="InterPro" id="IPR008162">
    <property type="entry name" value="Pyrophosphatase"/>
</dbReference>
<dbReference type="InterPro" id="IPR036649">
    <property type="entry name" value="Pyrophosphatase_sf"/>
</dbReference>
<dbReference type="PANTHER" id="PTHR10286">
    <property type="entry name" value="INORGANIC PYROPHOSPHATASE"/>
    <property type="match status" value="1"/>
</dbReference>
<dbReference type="Pfam" id="PF00719">
    <property type="entry name" value="Pyrophosphatase"/>
    <property type="match status" value="1"/>
</dbReference>
<dbReference type="SUPFAM" id="SSF50324">
    <property type="entry name" value="Inorganic pyrophosphatase"/>
    <property type="match status" value="1"/>
</dbReference>
<dbReference type="PROSITE" id="PS00387">
    <property type="entry name" value="PPASE"/>
    <property type="match status" value="1"/>
</dbReference>
<reference key="1">
    <citation type="submission" date="2004-11" db="EMBL/GenBank/DDBJ databases">
        <authorList>
            <consortium name="The German cDNA consortium"/>
        </authorList>
    </citation>
    <scope>NUCLEOTIDE SEQUENCE [LARGE SCALE MRNA]</scope>
    <source>
        <tissue>Brain cortex</tissue>
    </source>
</reference>
<protein>
    <recommendedName>
        <fullName>Inorganic pyrophosphatase</fullName>
        <ecNumber>3.6.1.1</ecNumber>
    </recommendedName>
    <alternativeName>
        <fullName>Pyrophosphate phospho-hydrolase</fullName>
        <shortName>PPase</shortName>
    </alternativeName>
</protein>
<gene>
    <name type="primary">PPA1</name>
    <name type="synonym">PP</name>
</gene>